<name>YEBQ_ECOLI</name>
<evidence type="ECO:0000255" key="1"/>
<evidence type="ECO:0000305" key="2"/>
<proteinExistence type="inferred from homology"/>
<comment type="subcellular location">
    <subcellularLocation>
        <location evidence="2">Cell inner membrane</location>
        <topology evidence="2">Multi-pass membrane protein</topology>
    </subcellularLocation>
</comment>
<comment type="similarity">
    <text evidence="2">Belongs to the major facilitator superfamily. TCR/Tet family.</text>
</comment>
<keyword id="KW-0997">Cell inner membrane</keyword>
<keyword id="KW-1003">Cell membrane</keyword>
<keyword id="KW-0472">Membrane</keyword>
<keyword id="KW-1185">Reference proteome</keyword>
<keyword id="KW-0812">Transmembrane</keyword>
<keyword id="KW-1133">Transmembrane helix</keyword>
<keyword id="KW-0813">Transport</keyword>
<accession>P76269</accession>
<gene>
    <name type="primary">yebQ</name>
    <name type="ordered locus">b1828</name>
    <name type="ordered locus">JW5299</name>
</gene>
<sequence>MPKVQADGLPLPQRYGAILTIVIGISMAVLDGAIANVALPTIATDLHATPASSIWVVNAYQIAIVISLLSFSFLGDMFGYRRIYKCGLVVFLLSSLFCALSDSLQMLTLARVIQGFGGAALMSVNTALIRLIYPQRFLGRGMGINSFIVAVSSAAGPTIAAAILSIASWKWLFLINVPLGIIALLLAMRFLPPNGSRASKPRFDLPSAVMNALTFGLLITALSGFAQGQSLTLIAAELVVMVVVGIFFIRRQLSLPVPLLPVDLLRIPLFSLSICTSVCSFCAQMLAMVSLPFYLQTVLGRSEVETGLLLTPWPLATMVMAPLAGYLIERVHAGLLGALGLFIMAAGLFSLVLLPASPADINIIWPMILCGAGFGLFQSPNNHTIITSAPRERSGGASGMLGTARLLGQSSGAALVALMLNQFGDNGTHVSLMAAAILAVIAACVSGLRITQPRSRA</sequence>
<feature type="chain" id="PRO_0000173449" description="Uncharacterized transporter YebQ">
    <location>
        <begin position="1"/>
        <end position="457"/>
    </location>
</feature>
<feature type="transmembrane region" description="Helical" evidence="1">
    <location>
        <begin position="15"/>
        <end position="35"/>
    </location>
</feature>
<feature type="transmembrane region" description="Helical" evidence="1">
    <location>
        <begin position="54"/>
        <end position="74"/>
    </location>
</feature>
<feature type="transmembrane region" description="Helical" evidence="1">
    <location>
        <begin position="87"/>
        <end position="107"/>
    </location>
</feature>
<feature type="transmembrane region" description="Helical" evidence="1">
    <location>
        <begin position="112"/>
        <end position="132"/>
    </location>
</feature>
<feature type="transmembrane region" description="Helical" evidence="1">
    <location>
        <begin position="144"/>
        <end position="164"/>
    </location>
</feature>
<feature type="transmembrane region" description="Helical" evidence="1">
    <location>
        <begin position="166"/>
        <end position="186"/>
    </location>
</feature>
<feature type="transmembrane region" description="Helical" evidence="1">
    <location>
        <begin position="205"/>
        <end position="225"/>
    </location>
</feature>
<feature type="transmembrane region" description="Helical" evidence="1">
    <location>
        <begin position="229"/>
        <end position="249"/>
    </location>
</feature>
<feature type="transmembrane region" description="Helical" evidence="1">
    <location>
        <begin position="269"/>
        <end position="289"/>
    </location>
</feature>
<feature type="transmembrane region" description="Helical" evidence="1">
    <location>
        <begin position="308"/>
        <end position="328"/>
    </location>
</feature>
<feature type="transmembrane region" description="Helical" evidence="1">
    <location>
        <begin position="334"/>
        <end position="354"/>
    </location>
</feature>
<feature type="transmembrane region" description="Helical" evidence="1">
    <location>
        <begin position="357"/>
        <end position="377"/>
    </location>
</feature>
<feature type="transmembrane region" description="Helical" evidence="1">
    <location>
        <begin position="400"/>
        <end position="420"/>
    </location>
</feature>
<feature type="transmembrane region" description="Helical" evidence="1">
    <location>
        <begin position="428"/>
        <end position="448"/>
    </location>
</feature>
<dbReference type="EMBL" id="U00096">
    <property type="protein sequence ID" value="AAC74898.2"/>
    <property type="molecule type" value="Genomic_DNA"/>
</dbReference>
<dbReference type="EMBL" id="AP009048">
    <property type="protein sequence ID" value="BAA15636.1"/>
    <property type="molecule type" value="Genomic_DNA"/>
</dbReference>
<dbReference type="RefSeq" id="NP_416342.4">
    <property type="nucleotide sequence ID" value="NC_000913.3"/>
</dbReference>
<dbReference type="RefSeq" id="WP_001127216.1">
    <property type="nucleotide sequence ID" value="NZ_STEB01000009.1"/>
</dbReference>
<dbReference type="SMR" id="P76269"/>
<dbReference type="BioGRID" id="4259155">
    <property type="interactions" value="157"/>
</dbReference>
<dbReference type="FunCoup" id="P76269">
    <property type="interactions" value="244"/>
</dbReference>
<dbReference type="STRING" id="511145.b1828"/>
<dbReference type="TCDB" id="2.A.1.3.17">
    <property type="family name" value="the major facilitator superfamily (mfs)"/>
</dbReference>
<dbReference type="PaxDb" id="511145-b1828"/>
<dbReference type="EnsemblBacteria" id="AAC74898">
    <property type="protein sequence ID" value="AAC74898"/>
    <property type="gene ID" value="b1828"/>
</dbReference>
<dbReference type="GeneID" id="946048"/>
<dbReference type="KEGG" id="ecj:JW5299"/>
<dbReference type="KEGG" id="eco:b1828"/>
<dbReference type="KEGG" id="ecoc:C3026_10420"/>
<dbReference type="PATRIC" id="fig|511145.12.peg.1906"/>
<dbReference type="EchoBASE" id="EB3773"/>
<dbReference type="eggNOG" id="COG2814">
    <property type="taxonomic scope" value="Bacteria"/>
</dbReference>
<dbReference type="HOGENOM" id="CLU_000960_28_3_6"/>
<dbReference type="InParanoid" id="P76269"/>
<dbReference type="OMA" id="MFINGWN"/>
<dbReference type="OrthoDB" id="9812221at2"/>
<dbReference type="PhylomeDB" id="P76269"/>
<dbReference type="BioCyc" id="EcoCyc:B1828-MONOMER"/>
<dbReference type="PRO" id="PR:P76269"/>
<dbReference type="Proteomes" id="UP000000625">
    <property type="component" value="Chromosome"/>
</dbReference>
<dbReference type="GO" id="GO:0005886">
    <property type="term" value="C:plasma membrane"/>
    <property type="evidence" value="ECO:0000314"/>
    <property type="project" value="EcoCyc"/>
</dbReference>
<dbReference type="GO" id="GO:0022857">
    <property type="term" value="F:transmembrane transporter activity"/>
    <property type="evidence" value="ECO:0000318"/>
    <property type="project" value="GO_Central"/>
</dbReference>
<dbReference type="GO" id="GO:0055085">
    <property type="term" value="P:transmembrane transport"/>
    <property type="evidence" value="ECO:0000318"/>
    <property type="project" value="GO_Central"/>
</dbReference>
<dbReference type="CDD" id="cd17321">
    <property type="entry name" value="MFS_MMR_MDR_like"/>
    <property type="match status" value="1"/>
</dbReference>
<dbReference type="FunFam" id="1.20.1250.20:FF:000168">
    <property type="entry name" value="Transporter, major facilitator family"/>
    <property type="match status" value="1"/>
</dbReference>
<dbReference type="FunFam" id="1.20.1720.10:FF:000011">
    <property type="entry name" value="Transporter, major facilitator family"/>
    <property type="match status" value="1"/>
</dbReference>
<dbReference type="Gene3D" id="1.20.1250.20">
    <property type="entry name" value="MFS general substrate transporter like domains"/>
    <property type="match status" value="1"/>
</dbReference>
<dbReference type="Gene3D" id="1.20.1720.10">
    <property type="entry name" value="Multidrug resistance protein D"/>
    <property type="match status" value="1"/>
</dbReference>
<dbReference type="InterPro" id="IPR011701">
    <property type="entry name" value="MFS"/>
</dbReference>
<dbReference type="InterPro" id="IPR020846">
    <property type="entry name" value="MFS_dom"/>
</dbReference>
<dbReference type="InterPro" id="IPR036259">
    <property type="entry name" value="MFS_trans_sf"/>
</dbReference>
<dbReference type="PANTHER" id="PTHR42718">
    <property type="entry name" value="MAJOR FACILITATOR SUPERFAMILY MULTIDRUG TRANSPORTER MFSC"/>
    <property type="match status" value="1"/>
</dbReference>
<dbReference type="PANTHER" id="PTHR42718:SF9">
    <property type="entry name" value="MAJOR FACILITATOR SUPERFAMILY MULTIDRUG TRANSPORTER MFSC"/>
    <property type="match status" value="1"/>
</dbReference>
<dbReference type="Pfam" id="PF07690">
    <property type="entry name" value="MFS_1"/>
    <property type="match status" value="1"/>
</dbReference>
<dbReference type="PRINTS" id="PR01036">
    <property type="entry name" value="TCRTETB"/>
</dbReference>
<dbReference type="SUPFAM" id="SSF103473">
    <property type="entry name" value="MFS general substrate transporter"/>
    <property type="match status" value="1"/>
</dbReference>
<dbReference type="PROSITE" id="PS50850">
    <property type="entry name" value="MFS"/>
    <property type="match status" value="1"/>
</dbReference>
<protein>
    <recommendedName>
        <fullName>Uncharacterized transporter YebQ</fullName>
    </recommendedName>
</protein>
<organism>
    <name type="scientific">Escherichia coli (strain K12)</name>
    <dbReference type="NCBI Taxonomy" id="83333"/>
    <lineage>
        <taxon>Bacteria</taxon>
        <taxon>Pseudomonadati</taxon>
        <taxon>Pseudomonadota</taxon>
        <taxon>Gammaproteobacteria</taxon>
        <taxon>Enterobacterales</taxon>
        <taxon>Enterobacteriaceae</taxon>
        <taxon>Escherichia</taxon>
    </lineage>
</organism>
<reference key="1">
    <citation type="journal article" date="1996" name="DNA Res.">
        <title>A 460-kb DNA sequence of the Escherichia coli K-12 genome corresponding to the 40.1-50.0 min region on the linkage map.</title>
        <authorList>
            <person name="Itoh T."/>
            <person name="Aiba H."/>
            <person name="Baba T."/>
            <person name="Fujita K."/>
            <person name="Hayashi K."/>
            <person name="Inada T."/>
            <person name="Isono K."/>
            <person name="Kasai H."/>
            <person name="Kimura S."/>
            <person name="Kitakawa M."/>
            <person name="Kitagawa M."/>
            <person name="Makino K."/>
            <person name="Miki T."/>
            <person name="Mizobuchi K."/>
            <person name="Mori H."/>
            <person name="Mori T."/>
            <person name="Motomura K."/>
            <person name="Nakade S."/>
            <person name="Nakamura Y."/>
            <person name="Nashimoto H."/>
            <person name="Nishio Y."/>
            <person name="Oshima T."/>
            <person name="Saito N."/>
            <person name="Sampei G."/>
            <person name="Seki Y."/>
            <person name="Sivasundaram S."/>
            <person name="Tagami H."/>
            <person name="Takeda J."/>
            <person name="Takemoto K."/>
            <person name="Wada C."/>
            <person name="Yamamoto Y."/>
            <person name="Horiuchi T."/>
        </authorList>
    </citation>
    <scope>NUCLEOTIDE SEQUENCE [LARGE SCALE GENOMIC DNA]</scope>
    <source>
        <strain>K12 / W3110 / ATCC 27325 / DSM 5911</strain>
    </source>
</reference>
<reference key="2">
    <citation type="journal article" date="1997" name="Science">
        <title>The complete genome sequence of Escherichia coli K-12.</title>
        <authorList>
            <person name="Blattner F.R."/>
            <person name="Plunkett G. III"/>
            <person name="Bloch C.A."/>
            <person name="Perna N.T."/>
            <person name="Burland V."/>
            <person name="Riley M."/>
            <person name="Collado-Vides J."/>
            <person name="Glasner J.D."/>
            <person name="Rode C.K."/>
            <person name="Mayhew G.F."/>
            <person name="Gregor J."/>
            <person name="Davis N.W."/>
            <person name="Kirkpatrick H.A."/>
            <person name="Goeden M.A."/>
            <person name="Rose D.J."/>
            <person name="Mau B."/>
            <person name="Shao Y."/>
        </authorList>
    </citation>
    <scope>NUCLEOTIDE SEQUENCE [LARGE SCALE GENOMIC DNA]</scope>
    <source>
        <strain>K12 / MG1655 / ATCC 47076</strain>
    </source>
</reference>
<reference key="3">
    <citation type="journal article" date="2006" name="Mol. Syst. Biol.">
        <title>Highly accurate genome sequences of Escherichia coli K-12 strains MG1655 and W3110.</title>
        <authorList>
            <person name="Hayashi K."/>
            <person name="Morooka N."/>
            <person name="Yamamoto Y."/>
            <person name="Fujita K."/>
            <person name="Isono K."/>
            <person name="Choi S."/>
            <person name="Ohtsubo E."/>
            <person name="Baba T."/>
            <person name="Wanner B.L."/>
            <person name="Mori H."/>
            <person name="Horiuchi T."/>
        </authorList>
    </citation>
    <scope>NUCLEOTIDE SEQUENCE [LARGE SCALE GENOMIC DNA]</scope>
    <source>
        <strain>K12 / W3110 / ATCC 27325 / DSM 5911</strain>
    </source>
</reference>